<protein>
    <recommendedName>
        <fullName>Frizzled-4</fullName>
        <shortName>Fz-4</shortName>
        <shortName>hFz4</shortName>
    </recommendedName>
    <alternativeName>
        <fullName>FzE4</fullName>
    </alternativeName>
    <cdAntigenName>CD344</cdAntigenName>
</protein>
<gene>
    <name type="primary">FZD4</name>
</gene>
<keyword id="KW-0002">3D-structure</keyword>
<keyword id="KW-1003">Cell membrane</keyword>
<keyword id="KW-0217">Developmental protein</keyword>
<keyword id="KW-0225">Disease variant</keyword>
<keyword id="KW-1015">Disulfide bond</keyword>
<keyword id="KW-0297">G-protein coupled receptor</keyword>
<keyword id="KW-0325">Glycoprotein</keyword>
<keyword id="KW-0472">Membrane</keyword>
<keyword id="KW-1267">Proteomics identification</keyword>
<keyword id="KW-0675">Receptor</keyword>
<keyword id="KW-1185">Reference proteome</keyword>
<keyword id="KW-0732">Signal</keyword>
<keyword id="KW-0807">Transducer</keyword>
<keyword id="KW-0812">Transmembrane</keyword>
<keyword id="KW-1133">Transmembrane helix</keyword>
<keyword id="KW-0832">Ubl conjugation</keyword>
<keyword id="KW-0879">Wnt signaling pathway</keyword>
<dbReference type="EMBL" id="AB032417">
    <property type="protein sequence ID" value="BAA86286.1"/>
    <property type="molecule type" value="mRNA"/>
</dbReference>
<dbReference type="EMBL" id="AY462097">
    <property type="protein sequence ID" value="AAR23924.1"/>
    <property type="molecule type" value="mRNA"/>
</dbReference>
<dbReference type="EMBL" id="AK292768">
    <property type="protein sequence ID" value="BAF85457.1"/>
    <property type="molecule type" value="mRNA"/>
</dbReference>
<dbReference type="EMBL" id="AP001528">
    <property type="status" value="NOT_ANNOTATED_CDS"/>
    <property type="molecule type" value="Genomic_DNA"/>
</dbReference>
<dbReference type="EMBL" id="BC114527">
    <property type="protein sequence ID" value="AAI14528.1"/>
    <property type="molecule type" value="mRNA"/>
</dbReference>
<dbReference type="EMBL" id="BC114622">
    <property type="protein sequence ID" value="AAI14623.1"/>
    <property type="molecule type" value="mRNA"/>
</dbReference>
<dbReference type="CCDS" id="CCDS8279.1"/>
<dbReference type="PIR" id="JC7127">
    <property type="entry name" value="JC7127"/>
</dbReference>
<dbReference type="RefSeq" id="NP_036325.2">
    <property type="nucleotide sequence ID" value="NM_012193.3"/>
</dbReference>
<dbReference type="PDB" id="5BPB">
    <property type="method" value="X-ray"/>
    <property type="resolution" value="2.20 A"/>
    <property type="chains" value="A/B/C/D=42-179"/>
</dbReference>
<dbReference type="PDB" id="5BPQ">
    <property type="method" value="X-ray"/>
    <property type="resolution" value="2.40 A"/>
    <property type="chains" value="A/B/C/D=42-179"/>
</dbReference>
<dbReference type="PDB" id="5BQC">
    <property type="method" value="X-ray"/>
    <property type="resolution" value="3.00 A"/>
    <property type="chains" value="B=42-179"/>
</dbReference>
<dbReference type="PDB" id="5BQE">
    <property type="method" value="X-ray"/>
    <property type="resolution" value="2.30 A"/>
    <property type="chains" value="C=42-179"/>
</dbReference>
<dbReference type="PDB" id="5CL1">
    <property type="method" value="X-ray"/>
    <property type="resolution" value="3.80 A"/>
    <property type="chains" value="C/D=38-160"/>
</dbReference>
<dbReference type="PDB" id="5CM4">
    <property type="method" value="X-ray"/>
    <property type="resolution" value="2.40 A"/>
    <property type="chains" value="A/B=40-164"/>
</dbReference>
<dbReference type="PDB" id="5UWG">
    <property type="method" value="X-ray"/>
    <property type="resolution" value="2.56 A"/>
    <property type="chains" value="A/B=40-164"/>
</dbReference>
<dbReference type="PDB" id="6BD4">
    <property type="method" value="X-ray"/>
    <property type="resolution" value="2.40 A"/>
    <property type="chains" value="A=178-517"/>
</dbReference>
<dbReference type="PDB" id="6NE1">
    <property type="method" value="X-ray"/>
    <property type="resolution" value="3.01 A"/>
    <property type="chains" value="A=42-161"/>
</dbReference>
<dbReference type="PDB" id="8WM9">
    <property type="method" value="EM"/>
    <property type="resolution" value="3.53 A"/>
    <property type="chains" value="A/B=1-537"/>
</dbReference>
<dbReference type="PDB" id="8WMA">
    <property type="method" value="EM"/>
    <property type="resolution" value="3.47 A"/>
    <property type="chains" value="A=1-537"/>
</dbReference>
<dbReference type="PDBsum" id="5BPB"/>
<dbReference type="PDBsum" id="5BPQ"/>
<dbReference type="PDBsum" id="5BQC"/>
<dbReference type="PDBsum" id="5BQE"/>
<dbReference type="PDBsum" id="5CL1"/>
<dbReference type="PDBsum" id="5CM4"/>
<dbReference type="PDBsum" id="5UWG"/>
<dbReference type="PDBsum" id="6BD4"/>
<dbReference type="PDBsum" id="6NE1"/>
<dbReference type="PDBsum" id="8WM9"/>
<dbReference type="PDBsum" id="8WMA"/>
<dbReference type="EMDB" id="EMD-37646"/>
<dbReference type="EMDB" id="EMD-37647"/>
<dbReference type="SMR" id="Q9ULV1"/>
<dbReference type="BioGRID" id="113918">
    <property type="interactions" value="20"/>
</dbReference>
<dbReference type="CORUM" id="Q9ULV1"/>
<dbReference type="FunCoup" id="Q9ULV1">
    <property type="interactions" value="540"/>
</dbReference>
<dbReference type="IntAct" id="Q9ULV1">
    <property type="interactions" value="18"/>
</dbReference>
<dbReference type="MINT" id="Q9ULV1"/>
<dbReference type="STRING" id="9606.ENSP00000434034"/>
<dbReference type="ChEMBL" id="CHEMBL4523491"/>
<dbReference type="GuidetoPHARMACOLOGY" id="232"/>
<dbReference type="GlyConnect" id="2003">
    <property type="glycosylation" value="5 N-Linked glycans (1 site)"/>
</dbReference>
<dbReference type="GlyCosmos" id="Q9ULV1">
    <property type="glycosylation" value="2 sites, 5 glycans"/>
</dbReference>
<dbReference type="GlyGen" id="Q9ULV1">
    <property type="glycosylation" value="2 sites, 9 N-linked glycans (2 sites)"/>
</dbReference>
<dbReference type="iPTMnet" id="Q9ULV1"/>
<dbReference type="PhosphoSitePlus" id="Q9ULV1"/>
<dbReference type="BioMuta" id="FZD4"/>
<dbReference type="DMDM" id="62298045"/>
<dbReference type="jPOST" id="Q9ULV1"/>
<dbReference type="MassIVE" id="Q9ULV1"/>
<dbReference type="PaxDb" id="9606-ENSP00000434034"/>
<dbReference type="PeptideAtlas" id="Q9ULV1"/>
<dbReference type="ProteomicsDB" id="85129"/>
<dbReference type="ABCD" id="Q9ULV1">
    <property type="antibodies" value="23 sequenced antibodies"/>
</dbReference>
<dbReference type="Antibodypedia" id="17696">
    <property type="antibodies" value="518 antibodies from 39 providers"/>
</dbReference>
<dbReference type="DNASU" id="8322"/>
<dbReference type="Ensembl" id="ENST00000531380.2">
    <property type="protein sequence ID" value="ENSP00000434034.1"/>
    <property type="gene ID" value="ENSG00000174804.4"/>
</dbReference>
<dbReference type="GeneID" id="8322"/>
<dbReference type="KEGG" id="hsa:8322"/>
<dbReference type="MANE-Select" id="ENST00000531380.2">
    <property type="protein sequence ID" value="ENSP00000434034.1"/>
    <property type="RefSeq nucleotide sequence ID" value="NM_012193.4"/>
    <property type="RefSeq protein sequence ID" value="NP_036325.2"/>
</dbReference>
<dbReference type="UCSC" id="uc001pce.4">
    <property type="organism name" value="human"/>
</dbReference>
<dbReference type="AGR" id="HGNC:4042"/>
<dbReference type="CTD" id="8322"/>
<dbReference type="DisGeNET" id="8322"/>
<dbReference type="GeneCards" id="FZD4"/>
<dbReference type="HGNC" id="HGNC:4042">
    <property type="gene designation" value="FZD4"/>
</dbReference>
<dbReference type="HPA" id="ENSG00000174804">
    <property type="expression patterns" value="Tissue enhanced (adipose)"/>
</dbReference>
<dbReference type="MalaCards" id="FZD4"/>
<dbReference type="MIM" id="133780">
    <property type="type" value="phenotype"/>
</dbReference>
<dbReference type="MIM" id="604579">
    <property type="type" value="gene"/>
</dbReference>
<dbReference type="neXtProt" id="NX_Q9ULV1"/>
<dbReference type="OpenTargets" id="ENSG00000174804"/>
<dbReference type="Orphanet" id="891">
    <property type="disease" value="Familial exudative vitreoretinopathy"/>
</dbReference>
<dbReference type="Orphanet" id="91495">
    <property type="disease" value="Persistent hyperplastic primary vitreous"/>
</dbReference>
<dbReference type="Orphanet" id="90050">
    <property type="disease" value="Retinopathy of prematurity"/>
</dbReference>
<dbReference type="PharmGKB" id="PA28459"/>
<dbReference type="VEuPathDB" id="HostDB:ENSG00000174804"/>
<dbReference type="eggNOG" id="KOG3577">
    <property type="taxonomic scope" value="Eukaryota"/>
</dbReference>
<dbReference type="GeneTree" id="ENSGT00940000157141"/>
<dbReference type="HOGENOM" id="CLU_007873_2_1_1"/>
<dbReference type="InParanoid" id="Q9ULV1"/>
<dbReference type="OMA" id="HWGEFRA"/>
<dbReference type="OrthoDB" id="5959102at2759"/>
<dbReference type="PAN-GO" id="Q9ULV1">
    <property type="GO annotations" value="6 GO annotations based on evolutionary models"/>
</dbReference>
<dbReference type="PhylomeDB" id="Q9ULV1"/>
<dbReference type="TreeFam" id="TF317907"/>
<dbReference type="PathwayCommons" id="Q9ULV1"/>
<dbReference type="Reactome" id="R-HSA-373080">
    <property type="pathway name" value="Class B/2 (Secretin family receptors)"/>
</dbReference>
<dbReference type="Reactome" id="R-HSA-4086398">
    <property type="pathway name" value="Ca2+ pathway"/>
</dbReference>
<dbReference type="Reactome" id="R-HSA-4608870">
    <property type="pathway name" value="Asymmetric localization of PCP proteins"/>
</dbReference>
<dbReference type="Reactome" id="R-HSA-4641263">
    <property type="pathway name" value="Regulation of FZD by ubiquitination"/>
</dbReference>
<dbReference type="Reactome" id="R-HSA-5099900">
    <property type="pathway name" value="WNT5A-dependent internalization of FZD4"/>
</dbReference>
<dbReference type="Reactome" id="R-HSA-5340588">
    <property type="pathway name" value="Signaling by RNF43 mutants"/>
</dbReference>
<dbReference type="Reactome" id="R-HSA-8856825">
    <property type="pathway name" value="Cargo recognition for clathrin-mediated endocytosis"/>
</dbReference>
<dbReference type="Reactome" id="R-HSA-8856828">
    <property type="pathway name" value="Clathrin-mediated endocytosis"/>
</dbReference>
<dbReference type="SignaLink" id="Q9ULV1"/>
<dbReference type="SIGNOR" id="Q9ULV1"/>
<dbReference type="BioGRID-ORCS" id="8322">
    <property type="hits" value="13 hits in 1159 CRISPR screens"/>
</dbReference>
<dbReference type="ChiTaRS" id="FZD4">
    <property type="organism name" value="human"/>
</dbReference>
<dbReference type="EvolutionaryTrace" id="Q9ULV1"/>
<dbReference type="GeneWiki" id="FZD4"/>
<dbReference type="GenomeRNAi" id="8322"/>
<dbReference type="Pharos" id="Q9ULV1">
    <property type="development level" value="Tchem"/>
</dbReference>
<dbReference type="PRO" id="PR:Q9ULV1"/>
<dbReference type="Proteomes" id="UP000005640">
    <property type="component" value="Chromosome 11"/>
</dbReference>
<dbReference type="RNAct" id="Q9ULV1">
    <property type="molecule type" value="protein"/>
</dbReference>
<dbReference type="Bgee" id="ENSG00000174804">
    <property type="expression patterns" value="Expressed in adipose tissue and 175 other cell types or tissues"/>
</dbReference>
<dbReference type="GO" id="GO:0009986">
    <property type="term" value="C:cell surface"/>
    <property type="evidence" value="ECO:0000314"/>
    <property type="project" value="BHF-UCL"/>
</dbReference>
<dbReference type="GO" id="GO:0005911">
    <property type="term" value="C:cell-cell junction"/>
    <property type="evidence" value="ECO:0007669"/>
    <property type="project" value="Ensembl"/>
</dbReference>
<dbReference type="GO" id="GO:0005929">
    <property type="term" value="C:cilium"/>
    <property type="evidence" value="ECO:0000314"/>
    <property type="project" value="HPA"/>
</dbReference>
<dbReference type="GO" id="GO:0030669">
    <property type="term" value="C:clathrin-coated endocytic vesicle membrane"/>
    <property type="evidence" value="ECO:0000304"/>
    <property type="project" value="Reactome"/>
</dbReference>
<dbReference type="GO" id="GO:0030425">
    <property type="term" value="C:dendrite"/>
    <property type="evidence" value="ECO:0000250"/>
    <property type="project" value="ARUK-UCL"/>
</dbReference>
<dbReference type="GO" id="GO:0098978">
    <property type="term" value="C:glutamatergic synapse"/>
    <property type="evidence" value="ECO:0007669"/>
    <property type="project" value="Ensembl"/>
</dbReference>
<dbReference type="GO" id="GO:0005654">
    <property type="term" value="C:nucleoplasm"/>
    <property type="evidence" value="ECO:0000314"/>
    <property type="project" value="HPA"/>
</dbReference>
<dbReference type="GO" id="GO:0005886">
    <property type="term" value="C:plasma membrane"/>
    <property type="evidence" value="ECO:0000314"/>
    <property type="project" value="UniProtKB"/>
</dbReference>
<dbReference type="GO" id="GO:0001540">
    <property type="term" value="F:amyloid-beta binding"/>
    <property type="evidence" value="ECO:0000353"/>
    <property type="project" value="ARUK-UCL"/>
</dbReference>
<dbReference type="GO" id="GO:0019955">
    <property type="term" value="F:cytokine binding"/>
    <property type="evidence" value="ECO:0000353"/>
    <property type="project" value="BHF-UCL"/>
</dbReference>
<dbReference type="GO" id="GO:0004896">
    <property type="term" value="F:cytokine receptor activity"/>
    <property type="evidence" value="ECO:0000314"/>
    <property type="project" value="BHF-UCL"/>
</dbReference>
<dbReference type="GO" id="GO:0004930">
    <property type="term" value="F:G protein-coupled receptor activity"/>
    <property type="evidence" value="ECO:0007669"/>
    <property type="project" value="UniProtKB-KW"/>
</dbReference>
<dbReference type="GO" id="GO:0030165">
    <property type="term" value="F:PDZ domain binding"/>
    <property type="evidence" value="ECO:0000314"/>
    <property type="project" value="UniProtKB"/>
</dbReference>
<dbReference type="GO" id="GO:0046982">
    <property type="term" value="F:protein heterodimerization activity"/>
    <property type="evidence" value="ECO:0000353"/>
    <property type="project" value="BHF-UCL"/>
</dbReference>
<dbReference type="GO" id="GO:0042803">
    <property type="term" value="F:protein homodimerization activity"/>
    <property type="evidence" value="ECO:0000353"/>
    <property type="project" value="BHF-UCL"/>
</dbReference>
<dbReference type="GO" id="GO:0044877">
    <property type="term" value="F:protein-containing complex binding"/>
    <property type="evidence" value="ECO:0000353"/>
    <property type="project" value="ARUK-UCL"/>
</dbReference>
<dbReference type="GO" id="GO:0038023">
    <property type="term" value="F:signaling receptor activity"/>
    <property type="evidence" value="ECO:0000250"/>
    <property type="project" value="ARUK-UCL"/>
</dbReference>
<dbReference type="GO" id="GO:0031625">
    <property type="term" value="F:ubiquitin protein ligase binding"/>
    <property type="evidence" value="ECO:0000353"/>
    <property type="project" value="UniProtKB"/>
</dbReference>
<dbReference type="GO" id="GO:0042813">
    <property type="term" value="F:Wnt receptor activity"/>
    <property type="evidence" value="ECO:0000314"/>
    <property type="project" value="WormBase"/>
</dbReference>
<dbReference type="GO" id="GO:0017147">
    <property type="term" value="F:Wnt-protein binding"/>
    <property type="evidence" value="ECO:0000318"/>
    <property type="project" value="GO_Central"/>
</dbReference>
<dbReference type="GO" id="GO:0001525">
    <property type="term" value="P:angiogenesis"/>
    <property type="evidence" value="ECO:0007669"/>
    <property type="project" value="Ensembl"/>
</dbReference>
<dbReference type="GO" id="GO:0060070">
    <property type="term" value="P:canonical Wnt signaling pathway"/>
    <property type="evidence" value="ECO:0000314"/>
    <property type="project" value="UniProtKB"/>
</dbReference>
<dbReference type="GO" id="GO:0008283">
    <property type="term" value="P:cell population proliferation"/>
    <property type="evidence" value="ECO:0007669"/>
    <property type="project" value="Ensembl"/>
</dbReference>
<dbReference type="GO" id="GO:1990830">
    <property type="term" value="P:cellular response to leukemia inhibitory factor"/>
    <property type="evidence" value="ECO:0007669"/>
    <property type="project" value="Ensembl"/>
</dbReference>
<dbReference type="GO" id="GO:0071300">
    <property type="term" value="P:cellular response to retinoic acid"/>
    <property type="evidence" value="ECO:0000250"/>
    <property type="project" value="UniProtKB"/>
</dbReference>
<dbReference type="GO" id="GO:0061301">
    <property type="term" value="P:cerebellum vasculature morphogenesis"/>
    <property type="evidence" value="ECO:0007669"/>
    <property type="project" value="Ensembl"/>
</dbReference>
<dbReference type="GO" id="GO:0045446">
    <property type="term" value="P:endothelial cell differentiation"/>
    <property type="evidence" value="ECO:0007669"/>
    <property type="project" value="Ensembl"/>
</dbReference>
<dbReference type="GO" id="GO:0060856">
    <property type="term" value="P:establishment of blood-brain barrier"/>
    <property type="evidence" value="ECO:0007669"/>
    <property type="project" value="Ensembl"/>
</dbReference>
<dbReference type="GO" id="GO:0035426">
    <property type="term" value="P:extracellular matrix-cell signaling"/>
    <property type="evidence" value="ECO:0007669"/>
    <property type="project" value="Ensembl"/>
</dbReference>
<dbReference type="GO" id="GO:0031987">
    <property type="term" value="P:locomotion involved in locomotory behavior"/>
    <property type="evidence" value="ECO:0007669"/>
    <property type="project" value="Ensembl"/>
</dbReference>
<dbReference type="GO" id="GO:0010812">
    <property type="term" value="P:negative regulation of cell-substrate adhesion"/>
    <property type="evidence" value="ECO:0000315"/>
    <property type="project" value="BHF-UCL"/>
</dbReference>
<dbReference type="GO" id="GO:0030182">
    <property type="term" value="P:neuron differentiation"/>
    <property type="evidence" value="ECO:0000250"/>
    <property type="project" value="UniProtKB"/>
</dbReference>
<dbReference type="GO" id="GO:0035567">
    <property type="term" value="P:non-canonical Wnt signaling pathway"/>
    <property type="evidence" value="ECO:0000318"/>
    <property type="project" value="GO_Central"/>
</dbReference>
<dbReference type="GO" id="GO:0110135">
    <property type="term" value="P:Norrin signaling pathway"/>
    <property type="evidence" value="ECO:0000314"/>
    <property type="project" value="BHF-UCL"/>
</dbReference>
<dbReference type="GO" id="GO:0030335">
    <property type="term" value="P:positive regulation of cell migration"/>
    <property type="evidence" value="ECO:0000315"/>
    <property type="project" value="ARUK-UCL"/>
</dbReference>
<dbReference type="GO" id="GO:0050775">
    <property type="term" value="P:positive regulation of dendrite morphogenesis"/>
    <property type="evidence" value="ECO:0007669"/>
    <property type="project" value="Ensembl"/>
</dbReference>
<dbReference type="GO" id="GO:0045893">
    <property type="term" value="P:positive regulation of DNA-templated transcription"/>
    <property type="evidence" value="ECO:0000314"/>
    <property type="project" value="BHF-UCL"/>
</dbReference>
<dbReference type="GO" id="GO:0150012">
    <property type="term" value="P:positive regulation of neuron projection arborization"/>
    <property type="evidence" value="ECO:0000250"/>
    <property type="project" value="ARUK-UCL"/>
</dbReference>
<dbReference type="GO" id="GO:0045944">
    <property type="term" value="P:positive regulation of transcription by RNA polymerase II"/>
    <property type="evidence" value="ECO:0000314"/>
    <property type="project" value="BHF-UCL"/>
</dbReference>
<dbReference type="GO" id="GO:0042701">
    <property type="term" value="P:progesterone secretion"/>
    <property type="evidence" value="ECO:0007669"/>
    <property type="project" value="Ensembl"/>
</dbReference>
<dbReference type="GO" id="GO:0030947">
    <property type="term" value="P:regulation of vascular endothelial growth factor receptor signaling pathway"/>
    <property type="evidence" value="ECO:0007669"/>
    <property type="project" value="Ensembl"/>
</dbReference>
<dbReference type="GO" id="GO:0001666">
    <property type="term" value="P:response to hypoxia"/>
    <property type="evidence" value="ECO:0007669"/>
    <property type="project" value="Ensembl"/>
</dbReference>
<dbReference type="GO" id="GO:0061299">
    <property type="term" value="P:retina vasculature morphogenesis in camera-type eye"/>
    <property type="evidence" value="ECO:0000315"/>
    <property type="project" value="BHF-UCL"/>
</dbReference>
<dbReference type="GO" id="GO:0061304">
    <property type="term" value="P:retinal blood vessel morphogenesis"/>
    <property type="evidence" value="ECO:0007669"/>
    <property type="project" value="Ensembl"/>
</dbReference>
<dbReference type="GO" id="GO:0007605">
    <property type="term" value="P:sensory perception of sound"/>
    <property type="evidence" value="ECO:0007669"/>
    <property type="project" value="Ensembl"/>
</dbReference>
<dbReference type="GO" id="GO:0034446">
    <property type="term" value="P:substrate adhesion-dependent cell spreading"/>
    <property type="evidence" value="ECO:0007669"/>
    <property type="project" value="Ensembl"/>
</dbReference>
<dbReference type="GO" id="GO:0001570">
    <property type="term" value="P:vasculogenesis"/>
    <property type="evidence" value="ECO:0007669"/>
    <property type="project" value="Ensembl"/>
</dbReference>
<dbReference type="GO" id="GO:0016055">
    <property type="term" value="P:Wnt signaling pathway"/>
    <property type="evidence" value="ECO:0000250"/>
    <property type="project" value="ARUK-UCL"/>
</dbReference>
<dbReference type="GO" id="GO:0007223">
    <property type="term" value="P:Wnt signaling pathway, calcium modulating pathway"/>
    <property type="evidence" value="ECO:0000314"/>
    <property type="project" value="BHF-UCL"/>
</dbReference>
<dbReference type="CDD" id="cd15038">
    <property type="entry name" value="7tmF_FZD4"/>
    <property type="match status" value="1"/>
</dbReference>
<dbReference type="CDD" id="cd07448">
    <property type="entry name" value="CRD_FZ4"/>
    <property type="match status" value="1"/>
</dbReference>
<dbReference type="FunFam" id="1.20.1070.10:FF:000020">
    <property type="entry name" value="Frizzled class receptor 10"/>
    <property type="match status" value="1"/>
</dbReference>
<dbReference type="FunFam" id="1.10.2000.10:FF:000008">
    <property type="entry name" value="Frizzled receptor 4"/>
    <property type="match status" value="1"/>
</dbReference>
<dbReference type="Gene3D" id="1.10.2000.10">
    <property type="entry name" value="Frizzled cysteine-rich domain"/>
    <property type="match status" value="1"/>
</dbReference>
<dbReference type="Gene3D" id="1.20.1070.10">
    <property type="entry name" value="Rhodopsin 7-helix transmembrane proteins"/>
    <property type="match status" value="1"/>
</dbReference>
<dbReference type="InterPro" id="IPR015526">
    <property type="entry name" value="Frizzled/SFRP"/>
</dbReference>
<dbReference type="InterPro" id="IPR000539">
    <property type="entry name" value="Frizzled/Smoothened_7TM"/>
</dbReference>
<dbReference type="InterPro" id="IPR020067">
    <property type="entry name" value="Frizzled_dom"/>
</dbReference>
<dbReference type="InterPro" id="IPR036790">
    <property type="entry name" value="Frizzled_dom_sf"/>
</dbReference>
<dbReference type="InterPro" id="IPR041765">
    <property type="entry name" value="FZ4_CRD"/>
</dbReference>
<dbReference type="InterPro" id="IPR026551">
    <property type="entry name" value="FZD4_7TM"/>
</dbReference>
<dbReference type="InterPro" id="IPR017981">
    <property type="entry name" value="GPCR_2-like_7TM"/>
</dbReference>
<dbReference type="PANTHER" id="PTHR11309">
    <property type="entry name" value="FRIZZLED"/>
    <property type="match status" value="1"/>
</dbReference>
<dbReference type="PANTHER" id="PTHR11309:SF23">
    <property type="entry name" value="FRIZZLED-4"/>
    <property type="match status" value="1"/>
</dbReference>
<dbReference type="Pfam" id="PF01534">
    <property type="entry name" value="Frizzled"/>
    <property type="match status" value="1"/>
</dbReference>
<dbReference type="Pfam" id="PF01392">
    <property type="entry name" value="Fz"/>
    <property type="match status" value="1"/>
</dbReference>
<dbReference type="PRINTS" id="PR00489">
    <property type="entry name" value="FRIZZLED"/>
</dbReference>
<dbReference type="SMART" id="SM00063">
    <property type="entry name" value="FRI"/>
    <property type="match status" value="1"/>
</dbReference>
<dbReference type="SMART" id="SM01330">
    <property type="entry name" value="Frizzled"/>
    <property type="match status" value="1"/>
</dbReference>
<dbReference type="SUPFAM" id="SSF63501">
    <property type="entry name" value="Frizzled cysteine-rich domain"/>
    <property type="match status" value="1"/>
</dbReference>
<dbReference type="PROSITE" id="PS50038">
    <property type="entry name" value="FZ"/>
    <property type="match status" value="1"/>
</dbReference>
<dbReference type="PROSITE" id="PS50261">
    <property type="entry name" value="G_PROTEIN_RECEP_F2_4"/>
    <property type="match status" value="1"/>
</dbReference>
<reference key="1">
    <citation type="journal article" date="1999" name="Biochem. Biophys. Res. Commun.">
        <title>Molecular cloning and characterization of human frizzled-4 on chromosome 11q14-q21.</title>
        <authorList>
            <person name="Kirikoshi H."/>
            <person name="Sagara N."/>
            <person name="Koike J."/>
            <person name="Tanaka K."/>
            <person name="Sekihara H."/>
            <person name="Hirai M."/>
            <person name="Katoh M."/>
        </authorList>
    </citation>
    <scope>NUCLEOTIDE SEQUENCE [MRNA]</scope>
    <scope>TISSUE SPECIFICITY</scope>
    <source>
        <tissue>Fetal lung</tissue>
    </source>
</reference>
<reference key="2">
    <citation type="submission" date="2003-11" db="EMBL/GenBank/DDBJ databases">
        <title>cDNA clones of human proteins involved in signal transduction sequenced by the Guthrie cDNA resource center (www.cdna.org).</title>
        <authorList>
            <person name="Kopatz S.A."/>
            <person name="Aronstam R.S."/>
            <person name="Sharma S.V."/>
        </authorList>
    </citation>
    <scope>NUCLEOTIDE SEQUENCE [LARGE SCALE MRNA]</scope>
    <source>
        <tissue>Heart</tissue>
    </source>
</reference>
<reference key="3">
    <citation type="journal article" date="2004" name="Nat. Genet.">
        <title>Complete sequencing and characterization of 21,243 full-length human cDNAs.</title>
        <authorList>
            <person name="Ota T."/>
            <person name="Suzuki Y."/>
            <person name="Nishikawa T."/>
            <person name="Otsuki T."/>
            <person name="Sugiyama T."/>
            <person name="Irie R."/>
            <person name="Wakamatsu A."/>
            <person name="Hayashi K."/>
            <person name="Sato H."/>
            <person name="Nagai K."/>
            <person name="Kimura K."/>
            <person name="Makita H."/>
            <person name="Sekine M."/>
            <person name="Obayashi M."/>
            <person name="Nishi T."/>
            <person name="Shibahara T."/>
            <person name="Tanaka T."/>
            <person name="Ishii S."/>
            <person name="Yamamoto J."/>
            <person name="Saito K."/>
            <person name="Kawai Y."/>
            <person name="Isono Y."/>
            <person name="Nakamura Y."/>
            <person name="Nagahari K."/>
            <person name="Murakami K."/>
            <person name="Yasuda T."/>
            <person name="Iwayanagi T."/>
            <person name="Wagatsuma M."/>
            <person name="Shiratori A."/>
            <person name="Sudo H."/>
            <person name="Hosoiri T."/>
            <person name="Kaku Y."/>
            <person name="Kodaira H."/>
            <person name="Kondo H."/>
            <person name="Sugawara M."/>
            <person name="Takahashi M."/>
            <person name="Kanda K."/>
            <person name="Yokoi T."/>
            <person name="Furuya T."/>
            <person name="Kikkawa E."/>
            <person name="Omura Y."/>
            <person name="Abe K."/>
            <person name="Kamihara K."/>
            <person name="Katsuta N."/>
            <person name="Sato K."/>
            <person name="Tanikawa M."/>
            <person name="Yamazaki M."/>
            <person name="Ninomiya K."/>
            <person name="Ishibashi T."/>
            <person name="Yamashita H."/>
            <person name="Murakawa K."/>
            <person name="Fujimori K."/>
            <person name="Tanai H."/>
            <person name="Kimata M."/>
            <person name="Watanabe M."/>
            <person name="Hiraoka S."/>
            <person name="Chiba Y."/>
            <person name="Ishida S."/>
            <person name="Ono Y."/>
            <person name="Takiguchi S."/>
            <person name="Watanabe S."/>
            <person name="Yosida M."/>
            <person name="Hotuta T."/>
            <person name="Kusano J."/>
            <person name="Kanehori K."/>
            <person name="Takahashi-Fujii A."/>
            <person name="Hara H."/>
            <person name="Tanase T.-O."/>
            <person name="Nomura Y."/>
            <person name="Togiya S."/>
            <person name="Komai F."/>
            <person name="Hara R."/>
            <person name="Takeuchi K."/>
            <person name="Arita M."/>
            <person name="Imose N."/>
            <person name="Musashino K."/>
            <person name="Yuuki H."/>
            <person name="Oshima A."/>
            <person name="Sasaki N."/>
            <person name="Aotsuka S."/>
            <person name="Yoshikawa Y."/>
            <person name="Matsunawa H."/>
            <person name="Ichihara T."/>
            <person name="Shiohata N."/>
            <person name="Sano S."/>
            <person name="Moriya S."/>
            <person name="Momiyama H."/>
            <person name="Satoh N."/>
            <person name="Takami S."/>
            <person name="Terashima Y."/>
            <person name="Suzuki O."/>
            <person name="Nakagawa S."/>
            <person name="Senoh A."/>
            <person name="Mizoguchi H."/>
            <person name="Goto Y."/>
            <person name="Shimizu F."/>
            <person name="Wakebe H."/>
            <person name="Hishigaki H."/>
            <person name="Watanabe T."/>
            <person name="Sugiyama A."/>
            <person name="Takemoto M."/>
            <person name="Kawakami B."/>
            <person name="Yamazaki M."/>
            <person name="Watanabe K."/>
            <person name="Kumagai A."/>
            <person name="Itakura S."/>
            <person name="Fukuzumi Y."/>
            <person name="Fujimori Y."/>
            <person name="Komiyama M."/>
            <person name="Tashiro H."/>
            <person name="Tanigami A."/>
            <person name="Fujiwara T."/>
            <person name="Ono T."/>
            <person name="Yamada K."/>
            <person name="Fujii Y."/>
            <person name="Ozaki K."/>
            <person name="Hirao M."/>
            <person name="Ohmori Y."/>
            <person name="Kawabata A."/>
            <person name="Hikiji T."/>
            <person name="Kobatake N."/>
            <person name="Inagaki H."/>
            <person name="Ikema Y."/>
            <person name="Okamoto S."/>
            <person name="Okitani R."/>
            <person name="Kawakami T."/>
            <person name="Noguchi S."/>
            <person name="Itoh T."/>
            <person name="Shigeta K."/>
            <person name="Senba T."/>
            <person name="Matsumura K."/>
            <person name="Nakajima Y."/>
            <person name="Mizuno T."/>
            <person name="Morinaga M."/>
            <person name="Sasaki M."/>
            <person name="Togashi T."/>
            <person name="Oyama M."/>
            <person name="Hata H."/>
            <person name="Watanabe M."/>
            <person name="Komatsu T."/>
            <person name="Mizushima-Sugano J."/>
            <person name="Satoh T."/>
            <person name="Shirai Y."/>
            <person name="Takahashi Y."/>
            <person name="Nakagawa K."/>
            <person name="Okumura K."/>
            <person name="Nagase T."/>
            <person name="Nomura N."/>
            <person name="Kikuchi H."/>
            <person name="Masuho Y."/>
            <person name="Yamashita R."/>
            <person name="Nakai K."/>
            <person name="Yada T."/>
            <person name="Nakamura Y."/>
            <person name="Ohara O."/>
            <person name="Isogai T."/>
            <person name="Sugano S."/>
        </authorList>
    </citation>
    <scope>NUCLEOTIDE SEQUENCE [LARGE SCALE MRNA]</scope>
    <source>
        <tissue>Trachea</tissue>
    </source>
</reference>
<reference key="4">
    <citation type="journal article" date="2006" name="Nature">
        <title>Human chromosome 11 DNA sequence and analysis including novel gene identification.</title>
        <authorList>
            <person name="Taylor T.D."/>
            <person name="Noguchi H."/>
            <person name="Totoki Y."/>
            <person name="Toyoda A."/>
            <person name="Kuroki Y."/>
            <person name="Dewar K."/>
            <person name="Lloyd C."/>
            <person name="Itoh T."/>
            <person name="Takeda T."/>
            <person name="Kim D.-W."/>
            <person name="She X."/>
            <person name="Barlow K.F."/>
            <person name="Bloom T."/>
            <person name="Bruford E."/>
            <person name="Chang J.L."/>
            <person name="Cuomo C.A."/>
            <person name="Eichler E."/>
            <person name="FitzGerald M.G."/>
            <person name="Jaffe D.B."/>
            <person name="LaButti K."/>
            <person name="Nicol R."/>
            <person name="Park H.-S."/>
            <person name="Seaman C."/>
            <person name="Sougnez C."/>
            <person name="Yang X."/>
            <person name="Zimmer A.R."/>
            <person name="Zody M.C."/>
            <person name="Birren B.W."/>
            <person name="Nusbaum C."/>
            <person name="Fujiyama A."/>
            <person name="Hattori M."/>
            <person name="Rogers J."/>
            <person name="Lander E.S."/>
            <person name="Sakaki Y."/>
        </authorList>
    </citation>
    <scope>NUCLEOTIDE SEQUENCE [LARGE SCALE GENOMIC DNA]</scope>
</reference>
<reference key="5">
    <citation type="journal article" date="2004" name="Genome Res.">
        <title>The status, quality, and expansion of the NIH full-length cDNA project: the Mammalian Gene Collection (MGC).</title>
        <authorList>
            <consortium name="The MGC Project Team"/>
        </authorList>
    </citation>
    <scope>NUCLEOTIDE SEQUENCE [LARGE SCALE MRNA]</scope>
</reference>
<reference key="6">
    <citation type="journal article" date="1998" name="Proc. Natl. Acad. Sci. U.S.A.">
        <title>A novel frizzled gene identified in human esophageal carcinoma mediates APC/beta-catenin signals.</title>
        <authorList>
            <person name="Tanaka S."/>
            <person name="Akiyoshi T."/>
            <person name="Mori M."/>
            <person name="Wands J.R."/>
            <person name="Sugimachi K."/>
        </authorList>
    </citation>
    <scope>NUCLEOTIDE SEQUENCE [MRNA] OF 257-318</scope>
    <source>
        <tissue>Esophageal carcinoma</tissue>
    </source>
</reference>
<reference key="7">
    <citation type="journal article" date="2012" name="Nature">
        <title>ZNRF3 promotes Wnt receptor turnover in an R-spondin-sensitive manner.</title>
        <authorList>
            <person name="Hao H.X."/>
            <person name="Xie Y."/>
            <person name="Zhang Y."/>
            <person name="Charlat O."/>
            <person name="Oster E."/>
            <person name="Avello M."/>
            <person name="Lei H."/>
            <person name="Mickanin C."/>
            <person name="Liu D."/>
            <person name="Ruffner H."/>
            <person name="Mao X."/>
            <person name="Ma Q."/>
            <person name="Zamponi R."/>
            <person name="Bouwmeester T."/>
            <person name="Finan P.M."/>
            <person name="Kirschner M.W."/>
            <person name="Porter J.A."/>
            <person name="Serluca F.C."/>
            <person name="Cong F."/>
        </authorList>
    </citation>
    <scope>UBIQUITINATION BY ZNRF3</scope>
</reference>
<reference key="8">
    <citation type="journal article" date="2014" name="J. Cell Sci.">
        <title>Glypican-3 binds to Frizzled and plays a direct role in the stimulation of canonical Wnt signaling.</title>
        <authorList>
            <person name="Capurro M."/>
            <person name="Martin T."/>
            <person name="Shi W."/>
            <person name="Filmus J."/>
        </authorList>
    </citation>
    <scope>INTERACTION WITH GPC3</scope>
</reference>
<reference evidence="25" key="9">
    <citation type="journal article" date="2018" name="Nature">
        <title>Crystal structure of the Frizzled 4 receptor in a ligand-free state.</title>
        <authorList>
            <person name="Yang S."/>
            <person name="Wu Y."/>
            <person name="Xu T.H."/>
            <person name="de Waal P.W."/>
            <person name="He Y."/>
            <person name="Pu M."/>
            <person name="Chen Y."/>
            <person name="DeBruine Z.J."/>
            <person name="Zhang B."/>
            <person name="Zaidi S.A."/>
            <person name="Popov P."/>
            <person name="Guo Y."/>
            <person name="Han G.W."/>
            <person name="Lu Y."/>
            <person name="Suino-Powell K."/>
            <person name="Dong S."/>
            <person name="Harikumar K.G."/>
            <person name="Miller L.J."/>
            <person name="Katritch V."/>
            <person name="Xu H.E."/>
            <person name="Shui W."/>
            <person name="Stevens R.C."/>
            <person name="Melcher K."/>
            <person name="Zhao S."/>
            <person name="Xu F."/>
        </authorList>
    </citation>
    <scope>X-RAY CRYSTALLOGRAPHY (2.40 ANGSTROMS) OF 178-517</scope>
    <scope>FUNCTION</scope>
    <scope>SUBCELLULAR LOCATION</scope>
    <scope>TRANSMEMBRANE DOMAINS</scope>
    <scope>DISULFIDE BONDS</scope>
    <scope>CHARACTERIZATION OF VARIANTS ARG-181 AND TYR-204</scope>
    <scope>MUTAGENESIS OF SER-233; TYR-250; ARG-253; TYR-265; TYR-269; GLU-341; ASP-371; TYR-378; ASN-381; LEU-399; SER-418; TYR-444; TYR-455; GLU-458; GLU-477; LYS-480; TRP-494 AND TRP-496</scope>
</reference>
<reference key="10">
    <citation type="journal article" date="2002" name="Nat. Genet.">
        <title>Mutant frizzled-4 disrupts retinal angiogenesis in familial exudative vitreoretinopathy.</title>
        <authorList>
            <person name="Robitaille J."/>
            <person name="MacDonald M.L.E."/>
            <person name="Kaykas A."/>
            <person name="Sheldahl L.C."/>
            <person name="Zeisler J."/>
            <person name="Dube M.-P."/>
            <person name="Zhang L.-H."/>
            <person name="Singaraja R.R."/>
            <person name="Guernsey D.L."/>
            <person name="Zheng B."/>
            <person name="Siebert L.F."/>
            <person name="Hoskin-Mott A."/>
            <person name="Trese M.T."/>
            <person name="Pimstone S.N."/>
            <person name="Shastry B.S."/>
            <person name="Moon R.T."/>
            <person name="Hayden M.R."/>
            <person name="Goldberg Y.P."/>
            <person name="Samuels M.E."/>
        </authorList>
    </citation>
    <scope>VARIANT EVR1 493-MET-TRP-494 DEL</scope>
    <scope>CHARACTERIZATION OF VARIANT EVR1 493-MET-TRP-494 DEL</scope>
</reference>
<reference key="11">
    <citation type="journal article" date="2003" name="Br. J. Ophthalmol.">
        <title>Frizzled 4 gene (FZD4) mutations in patients with familial exudative vitreoretinopathy with variable expressivity.</title>
        <authorList>
            <person name="Kondo H."/>
            <person name="Hayashi H."/>
            <person name="Oshima K."/>
            <person name="Tahira T."/>
            <person name="Hayashi K."/>
        </authorList>
    </citation>
    <scope>VARIANTS EVR1 TYR-69; VAL-105; GLN-417 AND ASP-488</scope>
</reference>
<reference key="12">
    <citation type="journal article" date="2004" name="Am. J. Ophthalmol.">
        <title>Novel mutation in FZD4 gene in a Japanese pedigree with familial exudative vitreoretinopathy.</title>
        <authorList>
            <person name="Yoshida S."/>
            <person name="Arita R."/>
            <person name="Yoshida A."/>
            <person name="Tada H."/>
            <person name="Emori A."/>
            <person name="Noda Y."/>
            <person name="Nakao S."/>
            <person name="Fujisawa K."/>
            <person name="Ishibashi T."/>
        </authorList>
    </citation>
    <scope>VARIANT EVR1 VAL-342</scope>
</reference>
<reference key="13">
    <citation type="journal article" date="2004" name="Cell">
        <title>Vascular development in the retina and inner ear: control by Norrin and Frizzled-4, a high-affinity ligand-receptor pair.</title>
        <authorList>
            <person name="Xu Q."/>
            <person name="Wang Y."/>
            <person name="Dabdoub A."/>
            <person name="Smallwood P.M."/>
            <person name="Williams J."/>
            <person name="Woods C."/>
            <person name="Kelley M.W."/>
            <person name="Jiang L."/>
            <person name="Tasman W."/>
            <person name="Zhang K."/>
            <person name="Nathans J."/>
        </authorList>
    </citation>
    <scope>VARIANTS EVR1 VAL-105 AND VAL-157</scope>
    <scope>CHARACTERIZATION OF VARIANTS EVR1 VAL-105; VAL-157 AND 493-MET-TRP-494 DEL</scope>
</reference>
<reference key="14">
    <citation type="journal article" date="2004" name="Invest. Ophthalmol. Vis. Sci.">
        <title>Spectrum and frequency of FZD4 mutations in familial exudative vitreoretinopathy.</title>
        <authorList>
            <person name="Toomes C."/>
            <person name="Bottomley H.M."/>
            <person name="Scott S."/>
            <person name="Mackey D.A."/>
            <person name="Craig J.E."/>
            <person name="Appukuttan B."/>
            <person name="Stout J.T."/>
            <person name="Flaxel C.J."/>
            <person name="Zhang K."/>
            <person name="Black G.C.M."/>
            <person name="Fryer A."/>
            <person name="Downey L.M."/>
            <person name="Inglehearn C.F."/>
        </authorList>
    </citation>
    <scope>VARIANTS EVR1 ASP-36; THR-105; VAL-157 AND PHE-497</scope>
    <scope>VARIANT SER-168</scope>
</reference>
<reference key="15">
    <citation type="journal article" date="2004" name="Ophthalmic Genet.">
        <title>Autosomal dominant familial exudative vitreoretinopathy in two Japanese families with FZD4 mutations (H69Y and C181R).</title>
        <authorList>
            <person name="Omoto S."/>
            <person name="Hayashi T."/>
            <person name="Kitahara K."/>
            <person name="Takeuchi T."/>
            <person name="Ueoka Y."/>
        </authorList>
    </citation>
    <scope>VARIANTS EVR1 TYR-69 AND ARG-181</scope>
</reference>
<reference key="16">
    <citation type="journal article" date="2005" name="Clin. Genet.">
        <title>Genetic variants of frizzled-4 gene in familial exudative vitreoretinopathy and advanced retinopathy of prematurity.</title>
        <authorList>
            <person name="MacDonald M.L."/>
            <person name="Goldberg Y.P."/>
            <person name="Macfarlane J."/>
            <person name="Samuels M.E."/>
            <person name="Trese M.T."/>
            <person name="Shastry B.S."/>
        </authorList>
    </citation>
    <scope>VARIANTS EVR1 SER-33 AND VAL-256</scope>
    <scope>VARIANT SER-168</scope>
</reference>
<reference key="17">
    <citation type="journal article" date="2005" name="Hum. Mutat.">
        <title>Complexity of the genotype-phenotype correlation in familial exudative vitreoretinopathy with mutations in the LRP5 and/or FZD4 genes.</title>
        <authorList>
            <person name="Qin M."/>
            <person name="Hayashi H."/>
            <person name="Oshima K."/>
            <person name="Tahira T."/>
            <person name="Hayashi K."/>
            <person name="Kondo H."/>
        </authorList>
    </citation>
    <scope>VARIANTS EVR1 TYR-69; VAL-105; CYS-335; VAL-342; GLN-417 AND ASP-488</scope>
</reference>
<reference key="18">
    <citation type="journal article" date="2006" name="Mol. Vis.">
        <title>Identification of novel FZD4 mutations in Indian patients with familial exudative vitreoretinopathy.</title>
        <authorList>
            <person name="Nallathambi J."/>
            <person name="Shukla D."/>
            <person name="Rajendran A."/>
            <person name="Namperumalsamy P."/>
            <person name="Muthulakshmi R."/>
            <person name="Sundaresan P."/>
        </authorList>
    </citation>
    <scope>VARIANTS EVR1 SER-33 AND ARG-204</scope>
</reference>
<reference key="19">
    <citation type="journal article" date="2006" name="Science">
        <title>The consensus coding sequences of human breast and colorectal cancers.</title>
        <authorList>
            <person name="Sjoeblom T."/>
            <person name="Jones S."/>
            <person name="Wood L.D."/>
            <person name="Parsons D.W."/>
            <person name="Lin J."/>
            <person name="Barber T.D."/>
            <person name="Mandelker D."/>
            <person name="Leary R.J."/>
            <person name="Ptak J."/>
            <person name="Silliman N."/>
            <person name="Szabo S."/>
            <person name="Buckhaults P."/>
            <person name="Farrell C."/>
            <person name="Meeh P."/>
            <person name="Markowitz S.D."/>
            <person name="Willis J."/>
            <person name="Dawson D."/>
            <person name="Willson J.K.V."/>
            <person name="Gazdar A.F."/>
            <person name="Hartigan J."/>
            <person name="Wu L."/>
            <person name="Liu C."/>
            <person name="Parmigiani G."/>
            <person name="Park B.H."/>
            <person name="Bachman K.E."/>
            <person name="Papadopoulos N."/>
            <person name="Vogelstein B."/>
            <person name="Kinzler K.W."/>
            <person name="Velculescu V.E."/>
        </authorList>
    </citation>
    <scope>VARIANT [LARGE SCALE ANALYSIS] THR-436</scope>
</reference>
<reference key="20">
    <citation type="journal article" date="2008" name="Hum. Genet.">
        <title>Moderate reduction of Norrin signaling activity associated with the causative missense mutations identified in patients with familial exudative vitreoretinopathy.</title>
        <authorList>
            <person name="Qin M."/>
            <person name="Kondo H."/>
            <person name="Tahira T."/>
            <person name="Hayashi K."/>
        </authorList>
    </citation>
    <scope>CHARACTERIZATION OF VARIANTS EVR1 VAL-105 AND GLN-417</scope>
    <scope>CHARACTERIZATION OF VARIANT TYR-69</scope>
</reference>
<reference key="21">
    <citation type="journal article" date="2009" name="Invest. Ophthalmol. Vis. Sci.">
        <title>Clinical and molecular evaluation of probands and family members with familial exudative vitreoretinopathy.</title>
        <authorList>
            <person name="Boonstra F.N."/>
            <person name="van Nouhuys C.E."/>
            <person name="Schuil J."/>
            <person name="de Wijs I.J."/>
            <person name="van der Donk K.P."/>
            <person name="Nikopoulos K."/>
            <person name="Mukhopadhyay A."/>
            <person name="Scheffer H."/>
            <person name="Tilanus M.A.D."/>
            <person name="Cremers F.P.M."/>
            <person name="Hoefsloot L.H."/>
        </authorList>
    </citation>
    <scope>VARIANTS EVR1 SER-33; LYS-223 AND PRO-445</scope>
    <scope>VARIANT SER-168</scope>
</reference>
<reference key="22">
    <citation type="journal article" date="2009" name="Ophthalmic Genet.">
        <title>Phenotypic overlap of familial exudative vitreoretinopathy (FEVR) with persistent fetal vasculature (PFV) caused by FZD4 mutations in two distinct pedigrees.</title>
        <authorList>
            <person name="Robitaille J.M."/>
            <person name="Wallace K."/>
            <person name="Zheng B."/>
            <person name="Beis M.J."/>
            <person name="Samuels M."/>
            <person name="Hoskin-Mott A."/>
            <person name="Guernsey D.L."/>
        </authorList>
    </citation>
    <scope>VARIANTS EVR1 THR-114 AND 493-MET-TRP-494 DEL</scope>
</reference>
<reference key="23">
    <citation type="journal article" date="2010" name="Hum. Mutat.">
        <title>Overview of the mutation spectrum in familial exudative vitreoretinopathy and Norrie disease with identification of 21 novel variants in FZD4, LRP5, and NDP.</title>
        <authorList>
            <person name="Nikopoulos K."/>
            <person name="Venselaar H."/>
            <person name="Collin R.W.J."/>
            <person name="Riveiro-Alvarez R."/>
            <person name="Boonstra F.N."/>
            <person name="Hooymans J.M."/>
            <person name="Mukhopadhyay A."/>
            <person name="Shears D."/>
            <person name="van Bers M."/>
            <person name="de Wijs I.J."/>
            <person name="van Essen A.J."/>
            <person name="Sijmons R.H."/>
            <person name="Tilanus M.A.D."/>
            <person name="van Nouhuys C.E."/>
            <person name="Ayuso C."/>
            <person name="Hoefsloot L.H."/>
            <person name="Cremers F.P.M."/>
        </authorList>
    </citation>
    <scope>VARIANTS EVR1 GLN-40; TYR-204 AND ARG-525</scope>
</reference>
<reference key="24">
    <citation type="journal article" date="2010" name="Ophthalmic Genet.">
        <title>Severe retinopathy of prematurity associated with FZD4 mutations.</title>
        <authorList>
            <person name="Ells A."/>
            <person name="Guernsey D.L."/>
            <person name="Wallace K."/>
            <person name="Zheng B."/>
            <person name="Vincer M."/>
            <person name="Allen A."/>
            <person name="Ingram A."/>
            <person name="DaSilva O."/>
            <person name="Siebert L."/>
            <person name="Sheidow T."/>
            <person name="Beis J."/>
            <person name="Robitaille J.M."/>
        </authorList>
    </citation>
    <scope>VARIANTS RETINOPATHY OF PREMATURITY ASN-203 AND GLY-370</scope>
</reference>
<proteinExistence type="evidence at protein level"/>
<accession>Q9ULV1</accession>
<accession>A8K9Q3</accession>
<accession>Q14C97</accession>
<accession>Q6S9E4</accession>
<organism>
    <name type="scientific">Homo sapiens</name>
    <name type="common">Human</name>
    <dbReference type="NCBI Taxonomy" id="9606"/>
    <lineage>
        <taxon>Eukaryota</taxon>
        <taxon>Metazoa</taxon>
        <taxon>Chordata</taxon>
        <taxon>Craniata</taxon>
        <taxon>Vertebrata</taxon>
        <taxon>Euteleostomi</taxon>
        <taxon>Mammalia</taxon>
        <taxon>Eutheria</taxon>
        <taxon>Euarchontoglires</taxon>
        <taxon>Primates</taxon>
        <taxon>Haplorrhini</taxon>
        <taxon>Catarrhini</taxon>
        <taxon>Hominidae</taxon>
        <taxon>Homo</taxon>
    </lineage>
</organism>
<comment type="function">
    <text evidence="2 23">Receptor for Wnt proteins (PubMed:30135577). Most frizzled receptors are coupled to the beta-catenin (CTNNB1) canonical signaling pathway, which leads to the activation of disheveled proteins, inhibition of GSK-3 kinase, nuclear accumulation of beta-catenin (CTNNB1) and activation of Wnt target genes (PubMed:30135577). Plays a critical role in retinal vascularization by acting as a receptor for Wnt proteins and norrin (NDP) (By similarity). In retina, it can be activated by Wnt protein-binding and also by Wnt-independent signaling via binding of norrin (NDP), promoting in both cases beta-catenin (CTNNB1) accumulation and stimulation of LEF/TCF-mediated transcriptional programs (By similarity). A second signaling pathway involving PKC and calcium fluxes has been seen for some family members, but it is not yet clear if it represents a distinct pathway or if it can be integrated in the canonical pathway, as PKC seems to be required for Wnt-mediated inactivation of GSK-3 kinase. Both pathways seem to involve interactions with G-proteins. May be involved in transduction and intercellular transmission of polarity information during tissue morphogenesis and/or in differentiated tissues.</text>
</comment>
<comment type="subunit">
    <text evidence="2 22">Interacts with MAGI3 and NDP (By similarity). Component of a complex, at least composed of TSPAN12, FZD4 and norrin (NDP) (By similarity). Interacts (via FZ domain) with TSKU; TSKU competes with WNT2B for binding to FZD4, inhibiting Wnt signaling and repressing peripheral eye development (By similarity). Interacts with glypican GPC3 (PubMed:24496449).</text>
</comment>
<comment type="interaction">
    <interactant intactId="EBI-2466380">
        <id>Q9ULV1</id>
    </interactant>
    <interactant intactId="EBI-640741">
        <id>P01023</id>
        <label>A2M</label>
    </interactant>
    <organismsDiffer>false</organismsDiffer>
    <experiments>3</experiments>
</comment>
<comment type="interaction">
    <interactant intactId="EBI-2466380">
        <id>Q9ULV1</id>
    </interactant>
    <interactant intactId="EBI-10976677">
        <id>G5E9A7</id>
        <label>DMWD</label>
    </interactant>
    <organismsDiffer>false</organismsDiffer>
    <experiments>3</experiments>
</comment>
<comment type="interaction">
    <interactant intactId="EBI-2466380">
        <id>Q9ULV1</id>
    </interactant>
    <interactant intactId="EBI-10968534">
        <id>P50570-2</id>
        <label>DNM2</label>
    </interactant>
    <organismsDiffer>false</organismsDiffer>
    <experiments>3</experiments>
</comment>
<comment type="interaction">
    <interactant intactId="EBI-2466380">
        <id>Q9ULV1</id>
    </interactant>
    <interactant intactId="EBI-466029">
        <id>P42858</id>
        <label>HTT</label>
    </interactant>
    <organismsDiffer>false</organismsDiffer>
    <experiments>9</experiments>
</comment>
<comment type="interaction">
    <interactant intactId="EBI-2466380">
        <id>Q9ULV1</id>
    </interactant>
    <interactant intactId="EBI-2466352">
        <id>Q00604</id>
        <label>NDP</label>
    </interactant>
    <organismsDiffer>false</organismsDiffer>
    <experiments>4</experiments>
</comment>
<comment type="interaction">
    <interactant intactId="EBI-2466380">
        <id>Q9ULV1</id>
    </interactant>
    <interactant intactId="EBI-5235340">
        <id>Q7Z699</id>
        <label>SPRED1</label>
    </interactant>
    <organismsDiffer>false</organismsDiffer>
    <experiments>3</experiments>
</comment>
<comment type="interaction">
    <interactant intactId="EBI-2466380">
        <id>Q9ULV1</id>
    </interactant>
    <interactant intactId="EBI-3504975">
        <id>G3GTH2</id>
        <label>Slc9a3r1</label>
    </interactant>
    <organismsDiffer>true</organismsDiffer>
    <experiments>2</experiments>
</comment>
<comment type="subcellular location">
    <subcellularLocation>
        <location evidence="23">Cell membrane</location>
        <topology evidence="3">Multi-pass membrane protein</topology>
    </subcellularLocation>
</comment>
<comment type="tissue specificity">
    <text evidence="5">Almost ubiquitous (PubMed:10544037). Largely expressed in adult heart, skeletal muscle, ovary, and fetal kidney (PubMed:10544037). Moderate amounts in adult liver, kidney, pancreas, spleen, and fetal lung, and small amounts in placenta, adult lung, prostate, testis, colon, fetal brain and liver (PubMed:10544037).</text>
</comment>
<comment type="domain">
    <text evidence="1">Lys-Thr-X-X-X-Trp motif interacts with the PDZ domain of Dvl (Disheveled) family members and is involved in the activation of the Wnt/beta-catenin signaling pathway.</text>
</comment>
<comment type="domain">
    <text evidence="1">The FZ domain is involved in binding with Wnt ligands.</text>
</comment>
<comment type="PTM">
    <text evidence="21">Ubiquitinated by ZNRF3, leading to its degradation by the proteasome.</text>
</comment>
<comment type="disease" evidence="6 7 8 9 10 11 12 13 15 16 17 18 20">
    <disease id="DI-01126">
        <name>Vitreoretinopathy, exudative 1</name>
        <acronym>EVR1</acronym>
        <description>A disorder of the retinal vasculature characterized by an abrupt cessation of growth of peripheral capillaries, leading to an avascular peripheral retina. This may lead to compensatory retinal neovascularization, which is thought to be induced by hypoxia from the initial avascular insult. New vessels are prone to leakage and rupture causing exudates and bleeding, followed by scarring, retinal detachment and blindness. Clinical features can be highly variable, even within the same family. Patients with mild forms of the disease are asymptomatic, and their only disease related abnormality is an arc of avascular retina in the extreme temporal periphery. In many ways the disease resembles retinopathy of prematurity but there is no evidence of prematurity or small birth weight in the patient history.</description>
        <dbReference type="MIM" id="133780"/>
    </disease>
    <text>The disease is caused by variants affecting the gene represented in this entry.</text>
</comment>
<comment type="similarity">
    <text evidence="24">Belongs to the G-protein coupled receptor Fz/Smo family.</text>
</comment>
<sequence length="537" mass="59881">MAWRGAGPSVPGAPGGVGLSLGLLLQLLLLLGPARGFGDEEERRCDPIRISMCQNLGYNVTKMPNLVGHELQTDAELQLTTFTPLIQYGCSSQLQFFLCSVYVPMCTEKINIPIGPCGGMCLSVKRRCEPVLKEFGFAWPESLNCSKFPPQNDHNHMCMEGPGDEEVPLPHKTPIQPGEECHSVGTNSDQYIWVKRSLNCVLKCGYDAGLYSRSAKEFTDIWMAVWASLCFISTAFTVLTFLIDSSRFSYPERPIIFLSMCYNIYSIAYIVRLTVGRERISCDFEEAAEPVLIQEGLKNTGCAIIFLLMYFFGMASSIWWVILTLTWFLAAGLKWGHEAIEMHSSYFHIAAWAIPAVKTIVILIMRLVDADELTGLCYVGNQNLDALTGFVVAPLFTYLVIGTLFIAAGLVALFKIRSNLQKDGTKTDKLERLMVKIGVFSVLYTVPATCVIACYFYEISNWALFRYSADDSNMAVEMLKIFMSLLVGITSGMWIWSAKTLHTWQKCSNRLVNSGKVKREKRGNGWVKPGKGSETVV</sequence>
<evidence type="ECO:0000250" key="1"/>
<evidence type="ECO:0000250" key="2">
    <source>
        <dbReference type="UniProtKB" id="Q61088"/>
    </source>
</evidence>
<evidence type="ECO:0000255" key="3"/>
<evidence type="ECO:0000255" key="4">
    <source>
        <dbReference type="PROSITE-ProRule" id="PRU00090"/>
    </source>
</evidence>
<evidence type="ECO:0000269" key="5">
    <source>
    </source>
</evidence>
<evidence type="ECO:0000269" key="6">
    <source>
    </source>
</evidence>
<evidence type="ECO:0000269" key="7">
    <source>
    </source>
</evidence>
<evidence type="ECO:0000269" key="8">
    <source>
    </source>
</evidence>
<evidence type="ECO:0000269" key="9">
    <source>
    </source>
</evidence>
<evidence type="ECO:0000269" key="10">
    <source>
    </source>
</evidence>
<evidence type="ECO:0000269" key="11">
    <source>
    </source>
</evidence>
<evidence type="ECO:0000269" key="12">
    <source>
    </source>
</evidence>
<evidence type="ECO:0000269" key="13">
    <source>
    </source>
</evidence>
<evidence type="ECO:0000269" key="14">
    <source>
    </source>
</evidence>
<evidence type="ECO:0000269" key="15">
    <source>
    </source>
</evidence>
<evidence type="ECO:0000269" key="16">
    <source>
    </source>
</evidence>
<evidence type="ECO:0000269" key="17">
    <source>
    </source>
</evidence>
<evidence type="ECO:0000269" key="18">
    <source>
    </source>
</evidence>
<evidence type="ECO:0000269" key="19">
    <source>
    </source>
</evidence>
<evidence type="ECO:0000269" key="20">
    <source>
    </source>
</evidence>
<evidence type="ECO:0000269" key="21">
    <source>
    </source>
</evidence>
<evidence type="ECO:0000269" key="22">
    <source>
    </source>
</evidence>
<evidence type="ECO:0000269" key="23">
    <source>
    </source>
</evidence>
<evidence type="ECO:0000305" key="24"/>
<evidence type="ECO:0007744" key="25">
    <source>
        <dbReference type="PDB" id="6BD4"/>
    </source>
</evidence>
<evidence type="ECO:0007829" key="26">
    <source>
        <dbReference type="PDB" id="5BPB"/>
    </source>
</evidence>
<evidence type="ECO:0007829" key="27">
    <source>
        <dbReference type="PDB" id="5BQC"/>
    </source>
</evidence>
<evidence type="ECO:0007829" key="28">
    <source>
        <dbReference type="PDB" id="6BD4"/>
    </source>
</evidence>
<evidence type="ECO:0007829" key="29">
    <source>
        <dbReference type="PDB" id="8WMA"/>
    </source>
</evidence>
<name>FZD4_HUMAN</name>
<feature type="signal peptide" evidence="3">
    <location>
        <begin position="1"/>
        <end position="36"/>
    </location>
</feature>
<feature type="chain" id="PRO_0000012985" description="Frizzled-4">
    <location>
        <begin position="37"/>
        <end position="537"/>
    </location>
</feature>
<feature type="topological domain" description="Extracellular" evidence="23">
    <location>
        <begin position="37"/>
        <end position="212"/>
    </location>
</feature>
<feature type="transmembrane region" description="Helical; Name=1" evidence="23">
    <location>
        <begin position="213"/>
        <end position="243"/>
    </location>
</feature>
<feature type="topological domain" description="Cytoplasmic" evidence="23">
    <location>
        <begin position="244"/>
        <end position="249"/>
    </location>
</feature>
<feature type="transmembrane region" description="Helical; Name=2" evidence="23">
    <location>
        <begin position="250"/>
        <end position="275"/>
    </location>
</feature>
<feature type="topological domain" description="Extracellular" evidence="23">
    <location>
        <begin position="276"/>
        <end position="299"/>
    </location>
</feature>
<feature type="transmembrane region" description="Helical; Name=3" evidence="23">
    <location>
        <begin position="300"/>
        <end position="333"/>
    </location>
</feature>
<feature type="topological domain" description="Cytoplasmic" evidence="23">
    <location>
        <begin position="334"/>
        <end position="336"/>
    </location>
</feature>
<feature type="transmembrane region" description="Helical; Name=4" evidence="23">
    <location>
        <begin position="337"/>
        <end position="365"/>
    </location>
</feature>
<feature type="topological domain" description="Extracellular" evidence="23">
    <location>
        <begin position="366"/>
        <end position="383"/>
    </location>
</feature>
<feature type="transmembrane region" description="Helical; Name=5" evidence="23">
    <location>
        <begin position="384"/>
        <end position="418"/>
    </location>
</feature>
<feature type="topological domain" description="Cytoplasmic" evidence="23">
    <location>
        <begin position="419"/>
        <end position="431"/>
    </location>
</feature>
<feature type="transmembrane region" description="Helical; Name=6" evidence="23">
    <location>
        <begin position="432"/>
        <end position="460"/>
    </location>
</feature>
<feature type="topological domain" description="Extracellular" evidence="23">
    <location>
        <begin position="461"/>
        <end position="473"/>
    </location>
</feature>
<feature type="transmembrane region" description="Helical; Name=7" evidence="23">
    <location>
        <begin position="474"/>
        <end position="495"/>
    </location>
</feature>
<feature type="topological domain" description="Cytoplasmic" evidence="23">
    <location>
        <begin position="496"/>
        <end position="537"/>
    </location>
</feature>
<feature type="domain" description="FZ" evidence="4">
    <location>
        <begin position="40"/>
        <end position="161"/>
    </location>
</feature>
<feature type="short sequence motif" description="Lys-Thr-X-X-X-Trp motif, mediates interaction with the PDZ domain of Dvl family members" evidence="1">
    <location>
        <begin position="499"/>
        <end position="504"/>
    </location>
</feature>
<feature type="short sequence motif" description="PDZ-binding">
    <location>
        <begin position="535"/>
        <end position="537"/>
    </location>
</feature>
<feature type="glycosylation site" description="N-linked (GlcNAc...) asparagine" evidence="3">
    <location>
        <position position="59"/>
    </location>
</feature>
<feature type="glycosylation site" description="N-linked (GlcNAc...) asparagine" evidence="3">
    <location>
        <position position="144"/>
    </location>
</feature>
<feature type="disulfide bond" evidence="4">
    <location>
        <begin position="45"/>
        <end position="106"/>
    </location>
</feature>
<feature type="disulfide bond" evidence="4">
    <location>
        <begin position="53"/>
        <end position="99"/>
    </location>
</feature>
<feature type="disulfide bond" evidence="4">
    <location>
        <begin position="90"/>
        <end position="128"/>
    </location>
</feature>
<feature type="disulfide bond" evidence="4">
    <location>
        <begin position="117"/>
        <end position="158"/>
    </location>
</feature>
<feature type="disulfide bond" evidence="4">
    <location>
        <begin position="121"/>
        <end position="145"/>
    </location>
</feature>
<feature type="disulfide bond" evidence="23">
    <location>
        <begin position="181"/>
        <end position="200"/>
    </location>
</feature>
<feature type="disulfide bond" evidence="23">
    <location>
        <begin position="204"/>
        <end position="282"/>
    </location>
</feature>
<feature type="disulfide bond" evidence="23">
    <location>
        <begin position="302"/>
        <end position="377"/>
    </location>
</feature>
<feature type="sequence variant" id="VAR_063920" description="In EVR1; benign; dbSNP:rs61735304." evidence="12 15 18">
    <original>P</original>
    <variation>S</variation>
    <location>
        <position position="33"/>
    </location>
</feature>
<feature type="sequence variant" id="VAR_063921" description="In EVR1; dbSNP:rs80358281." evidence="9">
    <original>G</original>
    <variation>D</variation>
    <location>
        <position position="36"/>
    </location>
</feature>
<feature type="sequence variant" id="VAR_063922" description="In EVR1; dbSNP:rs139401671." evidence="20">
    <original>E</original>
    <variation>Q</variation>
    <location>
        <position position="40"/>
    </location>
</feature>
<feature type="sequence variant" id="VAR_063923" description="In EVR1; minor reduction of its wild-type activity; dbSNP:rs80358282." evidence="7 10 13 16">
    <original>H</original>
    <variation>Y</variation>
    <location>
        <position position="69"/>
    </location>
</feature>
<feature type="sequence variant" id="VAR_063924" description="In EVR1; dbSNP:rs80358285." evidence="9">
    <original>M</original>
    <variation>T</variation>
    <location>
        <position position="105"/>
    </location>
</feature>
<feature type="sequence variant" id="VAR_038947" description="In EVR1; loss of function; dbSNP:rs80358284." evidence="7 8 13 16">
    <original>M</original>
    <variation>V</variation>
    <location>
        <position position="105"/>
    </location>
</feature>
<feature type="sequence variant" id="VAR_063925" description="In EVR1; dbSNP:rs2135041940." evidence="17">
    <original>I</original>
    <variation>T</variation>
    <location>
        <position position="114"/>
    </location>
</feature>
<feature type="sequence variant" id="VAR_038948" description="In EVR1; loss of function; dbSNP:rs80358286." evidence="8 9">
    <original>M</original>
    <variation>V</variation>
    <location>
        <position position="157"/>
    </location>
</feature>
<feature type="sequence variant" id="VAR_063926" description="In dbSNP:rs61735303." evidence="9 12 18">
    <original>P</original>
    <variation>S</variation>
    <location>
        <position position="168"/>
    </location>
</feature>
<feature type="sequence variant" id="VAR_063927" description="In EVR1; increased signaling activity; dbSNP:rs80358287." evidence="10 23">
    <original>C</original>
    <variation>R</variation>
    <location>
        <position position="181"/>
    </location>
</feature>
<feature type="sequence variant" id="VAR_063928" description="In retinopathy of prematurity; dbSNP:rs1476724511." evidence="19">
    <original>K</original>
    <variation>N</variation>
    <location>
        <position position="203"/>
    </location>
</feature>
<feature type="sequence variant" id="VAR_063929" description="In EVR1; reduced signaling activity in presence of WNT3A but no change in presence of NDP/norrin; dbSNP:rs80358288." evidence="15 23">
    <original>C</original>
    <variation>R</variation>
    <location>
        <position position="204"/>
    </location>
</feature>
<feature type="sequence variant" id="VAR_063930" description="In EVR1; dbSNP:rs1064794064." evidence="20">
    <original>C</original>
    <variation>Y</variation>
    <location>
        <position position="204"/>
    </location>
</feature>
<feature type="sequence variant" id="VAR_063931" description="In EVR1." evidence="18">
    <original>M</original>
    <variation>K</variation>
    <location>
        <position position="223"/>
    </location>
</feature>
<feature type="sequence variant" id="VAR_063932" description="In EVR1; dbSNP:rs104894223." evidence="12">
    <original>I</original>
    <variation>V</variation>
    <location>
        <position position="256"/>
    </location>
</feature>
<feature type="sequence variant" id="VAR_063933" description="In EVR1; dbSNP:rs80358292." evidence="13">
    <original>W</original>
    <variation>C</variation>
    <location>
        <position position="335"/>
    </location>
</feature>
<feature type="sequence variant" id="VAR_063934" description="In EVR1; dbSNP:rs80358293." evidence="11 13">
    <original>M</original>
    <variation>V</variation>
    <location>
        <position position="342"/>
    </location>
</feature>
<feature type="sequence variant" id="VAR_063935" description="In retinopathy of prematurity." evidence="19">
    <original>A</original>
    <variation>G</variation>
    <location>
        <position position="370"/>
    </location>
</feature>
<feature type="sequence variant" id="VAR_063936" description="In EVR1; 48% loss of its wild-type activity; associated in a EVR4 patient with mutation Cys-444 in LPR5; dbSNP:rs80358294." evidence="7 13 16">
    <original>R</original>
    <variation>Q</variation>
    <location>
        <position position="417"/>
    </location>
</feature>
<feature type="sequence variant" id="VAR_036413" description="In a colorectal cancer sample; somatic mutation." evidence="14">
    <original>K</original>
    <variation>T</variation>
    <location>
        <position position="436"/>
    </location>
</feature>
<feature type="sequence variant" id="VAR_063937" description="In EVR1; dbSNP:rs80358297." evidence="18">
    <original>T</original>
    <variation>P</variation>
    <location>
        <position position="445"/>
    </location>
</feature>
<feature type="sequence variant" id="VAR_063938" description="In EVR1; dbSNP:rs80358298." evidence="7 13">
    <original>G</original>
    <variation>D</variation>
    <location>
        <position position="488"/>
    </location>
</feature>
<feature type="sequence variant" id="VAR_017777" description="In EVR1; loss of function." evidence="6 8 17">
    <location>
        <begin position="493"/>
        <end position="494"/>
    </location>
</feature>
<feature type="sequence variant" id="VAR_063939" description="In EVR1; dbSNP:rs80358300." evidence="9">
    <original>S</original>
    <variation>F</variation>
    <location>
        <position position="497"/>
    </location>
</feature>
<feature type="sequence variant" id="VAR_063940" description="In EVR1." evidence="20">
    <original>G</original>
    <variation>R</variation>
    <location>
        <position position="525"/>
    </location>
</feature>
<feature type="mutagenesis site" description="Increased signaling activity in presence of NDP/norrin but not in presence of WNT3A." evidence="23">
    <original>S</original>
    <variation>A</variation>
    <location>
        <position position="233"/>
    </location>
</feature>
<feature type="mutagenesis site" description="Slightly increased signaling activity in presence of NDP/norrin and reduced signaling in presence of WNT3A." evidence="23">
    <original>S</original>
    <variation>F</variation>
    <location>
        <position position="233"/>
    </location>
</feature>
<feature type="mutagenesis site" description="Reduced signaling activity in presence of NDP/norrin." evidence="23">
    <original>Y</original>
    <variation>F</variation>
    <location>
        <position position="250"/>
    </location>
</feature>
<feature type="mutagenesis site" description="Reduced signaling activity." evidence="23">
    <original>Y</original>
    <variation>F</variation>
    <location>
        <position position="250"/>
    </location>
</feature>
<feature type="mutagenesis site" description="Reduced signaling activity in presence of NDP/norrin." evidence="23">
    <original>R</original>
    <variation>C</variation>
    <location>
        <position position="253"/>
    </location>
</feature>
<feature type="mutagenesis site" description="Slight increase in signaling activity." evidence="23">
    <original>Y</original>
    <variation>A</variation>
    <location>
        <position position="265"/>
    </location>
</feature>
<feature type="mutagenesis site" description="Increased signaling activity." evidence="23">
    <original>Y</original>
    <variation>A</variation>
    <location>
        <position position="269"/>
    </location>
</feature>
<feature type="mutagenesis site" description="Reduced signaling activity in presence of NDP/norrin." evidence="23">
    <original>E</original>
    <variation>A</variation>
    <location>
        <position position="341"/>
    </location>
</feature>
<feature type="mutagenesis site" description="No effect on signaling activity." evidence="23">
    <original>D</original>
    <variation>A</variation>
    <location>
        <position position="371"/>
    </location>
</feature>
<feature type="mutagenesis site" description="Increased signaling activity." evidence="23">
    <original>Y</original>
    <variation>A</variation>
    <location>
        <position position="378"/>
    </location>
</feature>
<feature type="mutagenesis site" description="Slight increase in signaling activity." evidence="23">
    <original>N</original>
    <variation>A</variation>
    <location>
        <position position="381"/>
    </location>
</feature>
<feature type="mutagenesis site" description="No effect on signaling activity." evidence="23">
    <original>L</original>
    <variation>F</variation>
    <location>
        <position position="399"/>
    </location>
</feature>
<feature type="mutagenesis site" description="Increased signaling activity." evidence="23">
    <original>S</original>
    <variation>N</variation>
    <location>
        <position position="418"/>
    </location>
</feature>
<feature type="mutagenesis site" description="Reduced signaling activity." evidence="23">
    <original>Y</original>
    <variation>A</variation>
    <variation>F</variation>
    <location>
        <position position="444"/>
    </location>
</feature>
<feature type="mutagenesis site" description="Increased signaling activity in presence of WNT3A but not in presence of NDP/norrin." evidence="23">
    <original>Y</original>
    <variation>A</variation>
    <location>
        <position position="455"/>
    </location>
</feature>
<feature type="mutagenesis site" description="No effect on signaling activity." evidence="23">
    <original>E</original>
    <variation>A</variation>
    <location>
        <position position="458"/>
    </location>
</feature>
<feature type="mutagenesis site" description="Increased signaling activity in presence of WNT3A but not in presence of NDP/norrin." evidence="23">
    <original>E</original>
    <variation>A</variation>
    <location>
        <position position="477"/>
    </location>
</feature>
<feature type="mutagenesis site" description="Increased signaling activity." evidence="23">
    <original>K</original>
    <variation>A</variation>
    <location>
        <position position="480"/>
    </location>
</feature>
<feature type="mutagenesis site" description="Reduced signaling activity." evidence="23">
    <original>W</original>
    <variation>L</variation>
    <location>
        <position position="494"/>
    </location>
</feature>
<feature type="mutagenesis site" description="Reduced signaling activity." evidence="23">
    <original>W</original>
    <variation>A</variation>
    <location>
        <position position="496"/>
    </location>
</feature>
<feature type="sequence conflict" description="In Ref. 1; BAA86286." evidence="24" ref="1">
    <original>I</original>
    <variation>T</variation>
    <location>
        <position position="481"/>
    </location>
</feature>
<feature type="sequence conflict" description="In Ref. 1; BAA86286." evidence="24" ref="1">
    <original>T</original>
    <variation>S</variation>
    <location>
        <position position="500"/>
    </location>
</feature>
<feature type="strand" evidence="27">
    <location>
        <begin position="45"/>
        <end position="47"/>
    </location>
</feature>
<feature type="helix" evidence="26">
    <location>
        <begin position="51"/>
        <end position="53"/>
    </location>
</feature>
<feature type="strand" evidence="26">
    <location>
        <begin position="55"/>
        <end position="57"/>
    </location>
</feature>
<feature type="strand" evidence="27">
    <location>
        <begin position="59"/>
        <end position="61"/>
    </location>
</feature>
<feature type="helix" evidence="26">
    <location>
        <begin position="72"/>
        <end position="79"/>
    </location>
</feature>
<feature type="helix" evidence="26">
    <location>
        <begin position="80"/>
        <end position="82"/>
    </location>
</feature>
<feature type="helix" evidence="26">
    <location>
        <begin position="83"/>
        <end position="88"/>
    </location>
</feature>
<feature type="helix" evidence="26">
    <location>
        <begin position="94"/>
        <end position="102"/>
    </location>
</feature>
<feature type="strand" evidence="26">
    <location>
        <begin position="105"/>
        <end position="107"/>
    </location>
</feature>
<feature type="strand" evidence="26">
    <location>
        <begin position="110"/>
        <end position="114"/>
    </location>
</feature>
<feature type="helix" evidence="26">
    <location>
        <begin position="118"/>
        <end position="134"/>
    </location>
</feature>
<feature type="helix" evidence="26">
    <location>
        <begin position="141"/>
        <end position="143"/>
    </location>
</feature>
<feature type="helix" evidence="26">
    <location>
        <begin position="145"/>
        <end position="147"/>
    </location>
</feature>
<feature type="strand" evidence="27">
    <location>
        <begin position="153"/>
        <end position="155"/>
    </location>
</feature>
<feature type="turn" evidence="28">
    <location>
        <begin position="186"/>
        <end position="190"/>
    </location>
</feature>
<feature type="strand" evidence="29">
    <location>
        <begin position="191"/>
        <end position="194"/>
    </location>
</feature>
<feature type="strand" evidence="28">
    <location>
        <begin position="197"/>
        <end position="201"/>
    </location>
</feature>
<feature type="strand" evidence="28">
    <location>
        <begin position="205"/>
        <end position="211"/>
    </location>
</feature>
<feature type="helix" evidence="28">
    <location>
        <begin position="213"/>
        <end position="243"/>
    </location>
</feature>
<feature type="helix" evidence="28">
    <location>
        <begin position="245"/>
        <end position="247"/>
    </location>
</feature>
<feature type="helix" evidence="28">
    <location>
        <begin position="250"/>
        <end position="252"/>
    </location>
</feature>
<feature type="helix" evidence="28">
    <location>
        <begin position="253"/>
        <end position="275"/>
    </location>
</feature>
<feature type="helix" evidence="28">
    <location>
        <begin position="277"/>
        <end position="281"/>
    </location>
</feature>
<feature type="strand" evidence="28">
    <location>
        <begin position="282"/>
        <end position="289"/>
    </location>
</feature>
<feature type="helix" evidence="29">
    <location>
        <begin position="296"/>
        <end position="298"/>
    </location>
</feature>
<feature type="helix" evidence="28">
    <location>
        <begin position="300"/>
        <end position="330"/>
    </location>
</feature>
<feature type="helix" evidence="28">
    <location>
        <begin position="337"/>
        <end position="341"/>
    </location>
</feature>
<feature type="helix" evidence="28">
    <location>
        <begin position="344"/>
        <end position="365"/>
    </location>
</feature>
<feature type="strand" evidence="28">
    <location>
        <begin position="368"/>
        <end position="370"/>
    </location>
</feature>
<feature type="turn" evidence="28">
    <location>
        <begin position="372"/>
        <end position="374"/>
    </location>
</feature>
<feature type="strand" evidence="28">
    <location>
        <begin position="377"/>
        <end position="382"/>
    </location>
</feature>
<feature type="helix" evidence="28">
    <location>
        <begin position="384"/>
        <end position="390"/>
    </location>
</feature>
<feature type="helix" evidence="28">
    <location>
        <begin position="392"/>
        <end position="417"/>
    </location>
</feature>
<feature type="helix" evidence="28">
    <location>
        <begin position="432"/>
        <end position="443"/>
    </location>
</feature>
<feature type="helix" evidence="28">
    <location>
        <begin position="445"/>
        <end position="460"/>
    </location>
</feature>
<feature type="helix" evidence="28">
    <location>
        <begin position="462"/>
        <end position="467"/>
    </location>
</feature>
<feature type="helix" evidence="28">
    <location>
        <begin position="474"/>
        <end position="489"/>
    </location>
</feature>
<feature type="helix" evidence="28">
    <location>
        <begin position="492"/>
        <end position="495"/>
    </location>
</feature>
<feature type="helix" evidence="28">
    <location>
        <begin position="498"/>
        <end position="511"/>
    </location>
</feature>